<organism>
    <name type="scientific">Clostridium acetobutylicum (strain ATCC 824 / DSM 792 / JCM 1419 / IAM 19013 / LMG 5710 / NBRC 13948 / NRRL B-527 / VKM B-1787 / 2291 / W)</name>
    <dbReference type="NCBI Taxonomy" id="272562"/>
    <lineage>
        <taxon>Bacteria</taxon>
        <taxon>Bacillati</taxon>
        <taxon>Bacillota</taxon>
        <taxon>Clostridia</taxon>
        <taxon>Eubacteriales</taxon>
        <taxon>Clostridiaceae</taxon>
        <taxon>Clostridium</taxon>
    </lineage>
</organism>
<accession>Q97FB0</accession>
<reference key="1">
    <citation type="journal article" date="2001" name="J. Bacteriol.">
        <title>Genome sequence and comparative analysis of the solvent-producing bacterium Clostridium acetobutylicum.</title>
        <authorList>
            <person name="Noelling J."/>
            <person name="Breton G."/>
            <person name="Omelchenko M.V."/>
            <person name="Makarova K.S."/>
            <person name="Zeng Q."/>
            <person name="Gibson R."/>
            <person name="Lee H.M."/>
            <person name="Dubois J."/>
            <person name="Qiu D."/>
            <person name="Hitti J."/>
            <person name="Wolf Y.I."/>
            <person name="Tatusov R.L."/>
            <person name="Sabathe F."/>
            <person name="Doucette-Stamm L.A."/>
            <person name="Soucaille P."/>
            <person name="Daly M.J."/>
            <person name="Bennett G.N."/>
            <person name="Koonin E.V."/>
            <person name="Smith D.R."/>
        </authorList>
    </citation>
    <scope>NUCLEOTIDE SEQUENCE [LARGE SCALE GENOMIC DNA]</scope>
    <source>
        <strain>ATCC 824 / DSM 792 / JCM 1419 / IAM 19013 / LMG 5710 / NBRC 13948 / NRRL B-527 / VKM B-1787 / 2291 / W</strain>
    </source>
</reference>
<sequence>MMERYLIKVLGRVQGVGFRYFAQSLAGTYSITGTVKNCEDATVRIEAQGEEKNLNKFLAEIRKGNRFVKVEDIVAKKIPTADNEKSFKIVY</sequence>
<evidence type="ECO:0000255" key="1">
    <source>
        <dbReference type="PROSITE-ProRule" id="PRU00520"/>
    </source>
</evidence>
<evidence type="ECO:0000305" key="2"/>
<keyword id="KW-0378">Hydrolase</keyword>
<keyword id="KW-1185">Reference proteome</keyword>
<name>ACYP_CLOAB</name>
<comment type="catalytic activity">
    <reaction>
        <text>an acyl phosphate + H2O = a carboxylate + phosphate + H(+)</text>
        <dbReference type="Rhea" id="RHEA:14965"/>
        <dbReference type="ChEBI" id="CHEBI:15377"/>
        <dbReference type="ChEBI" id="CHEBI:15378"/>
        <dbReference type="ChEBI" id="CHEBI:29067"/>
        <dbReference type="ChEBI" id="CHEBI:43474"/>
        <dbReference type="ChEBI" id="CHEBI:59918"/>
        <dbReference type="EC" id="3.6.1.7"/>
    </reaction>
</comment>
<comment type="similarity">
    <text evidence="2">Belongs to the acylphosphatase family.</text>
</comment>
<dbReference type="EC" id="3.6.1.7"/>
<dbReference type="EMBL" id="AE001437">
    <property type="protein sequence ID" value="AAK80774.1"/>
    <property type="molecule type" value="Genomic_DNA"/>
</dbReference>
<dbReference type="PIR" id="C97248">
    <property type="entry name" value="C97248"/>
</dbReference>
<dbReference type="RefSeq" id="NP_349434.1">
    <property type="nucleotide sequence ID" value="NC_003030.1"/>
</dbReference>
<dbReference type="RefSeq" id="WP_010966115.1">
    <property type="nucleotide sequence ID" value="NC_003030.1"/>
</dbReference>
<dbReference type="SMR" id="Q97FB0"/>
<dbReference type="STRING" id="272562.CA_C2830"/>
<dbReference type="KEGG" id="cac:CA_C2830"/>
<dbReference type="PATRIC" id="fig|272562.8.peg.3015"/>
<dbReference type="eggNOG" id="COG1254">
    <property type="taxonomic scope" value="Bacteria"/>
</dbReference>
<dbReference type="HOGENOM" id="CLU_141932_2_0_9"/>
<dbReference type="OrthoDB" id="9808093at2"/>
<dbReference type="Proteomes" id="UP000000814">
    <property type="component" value="Chromosome"/>
</dbReference>
<dbReference type="GO" id="GO:0003998">
    <property type="term" value="F:acylphosphatase activity"/>
    <property type="evidence" value="ECO:0007669"/>
    <property type="project" value="UniProtKB-EC"/>
</dbReference>
<dbReference type="Gene3D" id="3.30.70.100">
    <property type="match status" value="1"/>
</dbReference>
<dbReference type="InterPro" id="IPR020456">
    <property type="entry name" value="Acylphosphatase"/>
</dbReference>
<dbReference type="InterPro" id="IPR001792">
    <property type="entry name" value="Acylphosphatase-like_dom"/>
</dbReference>
<dbReference type="InterPro" id="IPR036046">
    <property type="entry name" value="Acylphosphatase-like_dom_sf"/>
</dbReference>
<dbReference type="InterPro" id="IPR017968">
    <property type="entry name" value="Acylphosphatase_CS"/>
</dbReference>
<dbReference type="PANTHER" id="PTHR47268">
    <property type="entry name" value="ACYLPHOSPHATASE"/>
    <property type="match status" value="1"/>
</dbReference>
<dbReference type="PANTHER" id="PTHR47268:SF4">
    <property type="entry name" value="ACYLPHOSPHATASE"/>
    <property type="match status" value="1"/>
</dbReference>
<dbReference type="Pfam" id="PF00708">
    <property type="entry name" value="Acylphosphatase"/>
    <property type="match status" value="1"/>
</dbReference>
<dbReference type="SUPFAM" id="SSF54975">
    <property type="entry name" value="Acylphosphatase/BLUF domain-like"/>
    <property type="match status" value="1"/>
</dbReference>
<dbReference type="PROSITE" id="PS00150">
    <property type="entry name" value="ACYLPHOSPHATASE_1"/>
    <property type="match status" value="1"/>
</dbReference>
<dbReference type="PROSITE" id="PS51160">
    <property type="entry name" value="ACYLPHOSPHATASE_3"/>
    <property type="match status" value="1"/>
</dbReference>
<gene>
    <name type="primary">acyP</name>
    <name type="ordered locus">CA_C2830</name>
</gene>
<feature type="chain" id="PRO_0000326683" description="Acylphosphatase">
    <location>
        <begin position="1"/>
        <end position="91"/>
    </location>
</feature>
<feature type="domain" description="Acylphosphatase-like" evidence="1">
    <location>
        <begin position="4"/>
        <end position="91"/>
    </location>
</feature>
<feature type="active site" evidence="1">
    <location>
        <position position="19"/>
    </location>
</feature>
<feature type="active site" evidence="1">
    <location>
        <position position="37"/>
    </location>
</feature>
<proteinExistence type="inferred from homology"/>
<protein>
    <recommendedName>
        <fullName>Acylphosphatase</fullName>
        <ecNumber>3.6.1.7</ecNumber>
    </recommendedName>
    <alternativeName>
        <fullName>Acylphosphate phosphohydrolase</fullName>
    </alternativeName>
</protein>